<proteinExistence type="inferred from homology"/>
<sequence>MDAVTINSFFMIGALLIGISVLLSPVSSKLGIPILLVFLAVGMLAGEDGIGQIAFDNYPVAYLVSNLALAIILLDGGMRTRVASFRVAFWPSVSLATLGVAVTTLLTGLLAMWLFNLSLLQGVLVGAIVGSTDAAAVFSLLKGRSLNERVGATLEIESGTNDPMAVFLTVTLIAVLGSAETNLSAGFLLLSFIQQFGVGALLGLAGGWILWWLINRNQLPEGLYSILAVSGGLMIFALSNALGGSGILSIYLTGLLLGNRPTRSRHAILNVLDGMTWLAQIGMFLVLGLLVTPSELMEIALPGLALAVGMILFARPIAVWIGLAPFKSFTAREKWFVSWVGLRGAVPIILAVFPMMAGLPNAQLYFNLAFFVVMVSLVVQGGTLTKAMSLAKVELPPKPEPISRTGVEIYPTSEWELFIYKLKADKWCIGEPLRNLFMPEGTRIAAVFRDNQLLHPSGSTELCEGDTLCVMAQERDLESLSRLFSEAPEKASLARFFGDFFLDIEAKLQDVALLYGLDLGELEADAKLKDLVLEHLGETPVLGDYFEWHGLQWVVADVVDWKVTKIGLRLPPEEELQEGAE</sequence>
<comment type="function">
    <text evidence="1">K(+)/H(+) antiporter that extrudes potassium in exchange for external protons and maintains the internal concentration of potassium under toxic levels.</text>
</comment>
<comment type="catalytic activity">
    <reaction evidence="1">
        <text>K(+)(in) + H(+)(out) = K(+)(out) + H(+)(in)</text>
        <dbReference type="Rhea" id="RHEA:29467"/>
        <dbReference type="ChEBI" id="CHEBI:15378"/>
        <dbReference type="ChEBI" id="CHEBI:29103"/>
    </reaction>
    <physiologicalReaction direction="left-to-right" evidence="1">
        <dbReference type="Rhea" id="RHEA:29468"/>
    </physiologicalReaction>
</comment>
<comment type="subcellular location">
    <subcellularLocation>
        <location evidence="1">Cell inner membrane</location>
        <topology evidence="1">Multi-pass membrane protein</topology>
    </subcellularLocation>
</comment>
<comment type="similarity">
    <text evidence="1">Belongs to the monovalent cation:proton antiporter 1 (CPA1) transporter (TC 2.A.36) family. NhaP2 subfamily.</text>
</comment>
<organism>
    <name type="scientific">Vibrio cholerae serotype O1 (strain ATCC 39315 / El Tor Inaba N16961)</name>
    <dbReference type="NCBI Taxonomy" id="243277"/>
    <lineage>
        <taxon>Bacteria</taxon>
        <taxon>Pseudomonadati</taxon>
        <taxon>Pseudomonadota</taxon>
        <taxon>Gammaproteobacteria</taxon>
        <taxon>Vibrionales</taxon>
        <taxon>Vibrionaceae</taxon>
        <taxon>Vibrio</taxon>
    </lineage>
</organism>
<dbReference type="EMBL" id="AE003852">
    <property type="protein sequence ID" value="AAF95843.1"/>
    <property type="molecule type" value="Genomic_DNA"/>
</dbReference>
<dbReference type="PIR" id="C82043">
    <property type="entry name" value="C82043"/>
</dbReference>
<dbReference type="RefSeq" id="NP_232330.1">
    <property type="nucleotide sequence ID" value="NC_002505.1"/>
</dbReference>
<dbReference type="RefSeq" id="WP_000340298.1">
    <property type="nucleotide sequence ID" value="NZ_LT906614.1"/>
</dbReference>
<dbReference type="SMR" id="Q9KNM9"/>
<dbReference type="STRING" id="243277.VC_2703"/>
<dbReference type="TCDB" id="2.A.36.6.5">
    <property type="family name" value="the monovalent cation:proton antiporter-1 (cpa1) family"/>
</dbReference>
<dbReference type="DNASU" id="2615531"/>
<dbReference type="EnsemblBacteria" id="AAF95843">
    <property type="protein sequence ID" value="AAF95843"/>
    <property type="gene ID" value="VC_2703"/>
</dbReference>
<dbReference type="KEGG" id="vch:VC_2703"/>
<dbReference type="PATRIC" id="fig|243277.26.peg.2579"/>
<dbReference type="eggNOG" id="COG3263">
    <property type="taxonomic scope" value="Bacteria"/>
</dbReference>
<dbReference type="HOGENOM" id="CLU_005912_9_2_6"/>
<dbReference type="Proteomes" id="UP000000584">
    <property type="component" value="Chromosome 1"/>
</dbReference>
<dbReference type="GO" id="GO:0005886">
    <property type="term" value="C:plasma membrane"/>
    <property type="evidence" value="ECO:0007669"/>
    <property type="project" value="UniProtKB-SubCell"/>
</dbReference>
<dbReference type="GO" id="GO:0050660">
    <property type="term" value="F:flavin adenine dinucleotide binding"/>
    <property type="evidence" value="ECO:0007669"/>
    <property type="project" value="InterPro"/>
</dbReference>
<dbReference type="GO" id="GO:0015386">
    <property type="term" value="F:potassium:proton antiporter activity"/>
    <property type="evidence" value="ECO:0000318"/>
    <property type="project" value="GO_Central"/>
</dbReference>
<dbReference type="GO" id="GO:0006884">
    <property type="term" value="P:cell volume homeostasis"/>
    <property type="evidence" value="ECO:0007669"/>
    <property type="project" value="InterPro"/>
</dbReference>
<dbReference type="GO" id="GO:0030007">
    <property type="term" value="P:intracellular potassium ion homeostasis"/>
    <property type="evidence" value="ECO:0000318"/>
    <property type="project" value="GO_Central"/>
</dbReference>
<dbReference type="Gene3D" id="1.20.1530.20">
    <property type="match status" value="1"/>
</dbReference>
<dbReference type="Gene3D" id="3.30.70.1450">
    <property type="entry name" value="Regulator of K+ conductance, C-terminal domain"/>
    <property type="match status" value="1"/>
</dbReference>
<dbReference type="HAMAP" id="MF_01075">
    <property type="entry name" value="NhaP2"/>
    <property type="match status" value="1"/>
</dbReference>
<dbReference type="InterPro" id="IPR006153">
    <property type="entry name" value="Cation/H_exchanger_TM"/>
</dbReference>
<dbReference type="InterPro" id="IPR036318">
    <property type="entry name" value="FAD-bd_PCMH-like_sf"/>
</dbReference>
<dbReference type="InterPro" id="IPR038770">
    <property type="entry name" value="Na+/solute_symporter_sf"/>
</dbReference>
<dbReference type="InterPro" id="IPR023729">
    <property type="entry name" value="NhaP2"/>
</dbReference>
<dbReference type="InterPro" id="IPR006037">
    <property type="entry name" value="RCK_C"/>
</dbReference>
<dbReference type="InterPro" id="IPR036721">
    <property type="entry name" value="RCK_C_sf"/>
</dbReference>
<dbReference type="InterPro" id="IPR005170">
    <property type="entry name" value="Transptr-assoc_dom"/>
</dbReference>
<dbReference type="NCBIfam" id="NF003714">
    <property type="entry name" value="PRK05326.1-1"/>
    <property type="match status" value="1"/>
</dbReference>
<dbReference type="NCBIfam" id="NF003715">
    <property type="entry name" value="PRK05326.1-2"/>
    <property type="match status" value="1"/>
</dbReference>
<dbReference type="NCBIfam" id="NF003716">
    <property type="entry name" value="PRK05326.1-3"/>
    <property type="match status" value="1"/>
</dbReference>
<dbReference type="PANTHER" id="PTHR32507:SF7">
    <property type="entry name" value="K(+)_H(+) ANTIPORTER NHAP2"/>
    <property type="match status" value="1"/>
</dbReference>
<dbReference type="PANTHER" id="PTHR32507">
    <property type="entry name" value="NA(+)/H(+) ANTIPORTER 1"/>
    <property type="match status" value="1"/>
</dbReference>
<dbReference type="Pfam" id="PF03471">
    <property type="entry name" value="CorC_HlyC"/>
    <property type="match status" value="1"/>
</dbReference>
<dbReference type="Pfam" id="PF00999">
    <property type="entry name" value="Na_H_Exchanger"/>
    <property type="match status" value="1"/>
</dbReference>
<dbReference type="Pfam" id="PF02080">
    <property type="entry name" value="TrkA_C"/>
    <property type="match status" value="1"/>
</dbReference>
<dbReference type="SMART" id="SM01091">
    <property type="entry name" value="CorC_HlyC"/>
    <property type="match status" value="1"/>
</dbReference>
<dbReference type="SUPFAM" id="SSF56176">
    <property type="entry name" value="FAD-binding/transporter-associated domain-like"/>
    <property type="match status" value="1"/>
</dbReference>
<dbReference type="SUPFAM" id="SSF116726">
    <property type="entry name" value="TrkA C-terminal domain-like"/>
    <property type="match status" value="1"/>
</dbReference>
<dbReference type="PROSITE" id="PS51202">
    <property type="entry name" value="RCK_C"/>
    <property type="match status" value="1"/>
</dbReference>
<feature type="chain" id="PRO_0000052397" description="K(+)/H(+) antiporter NhaP2">
    <location>
        <begin position="1"/>
        <end position="581"/>
    </location>
</feature>
<feature type="transmembrane region" description="Helical" evidence="1">
    <location>
        <begin position="3"/>
        <end position="23"/>
    </location>
</feature>
<feature type="transmembrane region" description="Helical" evidence="1">
    <location>
        <begin position="30"/>
        <end position="50"/>
    </location>
</feature>
<feature type="transmembrane region" description="Helical" evidence="1">
    <location>
        <begin position="58"/>
        <end position="78"/>
    </location>
</feature>
<feature type="transmembrane region" description="Helical" evidence="1">
    <location>
        <begin position="87"/>
        <end position="107"/>
    </location>
</feature>
<feature type="transmembrane region" description="Helical" evidence="1">
    <location>
        <begin position="109"/>
        <end position="129"/>
    </location>
</feature>
<feature type="transmembrane region" description="Helical" evidence="1">
    <location>
        <begin position="192"/>
        <end position="212"/>
    </location>
</feature>
<feature type="transmembrane region" description="Helical" evidence="1">
    <location>
        <begin position="232"/>
        <end position="252"/>
    </location>
</feature>
<feature type="transmembrane region" description="Helical" evidence="1">
    <location>
        <begin position="271"/>
        <end position="291"/>
    </location>
</feature>
<feature type="transmembrane region" description="Helical" evidence="1">
    <location>
        <begin position="304"/>
        <end position="324"/>
    </location>
</feature>
<feature type="transmembrane region" description="Helical" evidence="1">
    <location>
        <begin position="335"/>
        <end position="355"/>
    </location>
</feature>
<feature type="transmembrane region" description="Helical" evidence="1">
    <location>
        <begin position="364"/>
        <end position="384"/>
    </location>
</feature>
<feature type="domain" description="RCK C-terminal" evidence="1">
    <location>
        <begin position="405"/>
        <end position="486"/>
    </location>
</feature>
<accession>Q9KNM9</accession>
<evidence type="ECO:0000255" key="1">
    <source>
        <dbReference type="HAMAP-Rule" id="MF_01075"/>
    </source>
</evidence>
<protein>
    <recommendedName>
        <fullName evidence="1">K(+)/H(+) antiporter NhaP2</fullName>
    </recommendedName>
    <alternativeName>
        <fullName evidence="1">Potassium/proton antiporter NhaP2</fullName>
    </alternativeName>
</protein>
<name>NHAP2_VIBCH</name>
<keyword id="KW-0050">Antiport</keyword>
<keyword id="KW-0997">Cell inner membrane</keyword>
<keyword id="KW-1003">Cell membrane</keyword>
<keyword id="KW-0406">Ion transport</keyword>
<keyword id="KW-0472">Membrane</keyword>
<keyword id="KW-0630">Potassium</keyword>
<keyword id="KW-0633">Potassium transport</keyword>
<keyword id="KW-1185">Reference proteome</keyword>
<keyword id="KW-0812">Transmembrane</keyword>
<keyword id="KW-1133">Transmembrane helix</keyword>
<keyword id="KW-0813">Transport</keyword>
<gene>
    <name evidence="1" type="primary">nhaP2</name>
    <name type="synonym">cvrA</name>
    <name type="ordered locus">VC_2703</name>
</gene>
<reference key="1">
    <citation type="journal article" date="2000" name="Nature">
        <title>DNA sequence of both chromosomes of the cholera pathogen Vibrio cholerae.</title>
        <authorList>
            <person name="Heidelberg J.F."/>
            <person name="Eisen J.A."/>
            <person name="Nelson W.C."/>
            <person name="Clayton R.A."/>
            <person name="Gwinn M.L."/>
            <person name="Dodson R.J."/>
            <person name="Haft D.H."/>
            <person name="Hickey E.K."/>
            <person name="Peterson J.D."/>
            <person name="Umayam L.A."/>
            <person name="Gill S.R."/>
            <person name="Nelson K.E."/>
            <person name="Read T.D."/>
            <person name="Tettelin H."/>
            <person name="Richardson D.L."/>
            <person name="Ermolaeva M.D."/>
            <person name="Vamathevan J.J."/>
            <person name="Bass S."/>
            <person name="Qin H."/>
            <person name="Dragoi I."/>
            <person name="Sellers P."/>
            <person name="McDonald L.A."/>
            <person name="Utterback T.R."/>
            <person name="Fleischmann R.D."/>
            <person name="Nierman W.C."/>
            <person name="White O."/>
            <person name="Salzberg S.L."/>
            <person name="Smith H.O."/>
            <person name="Colwell R.R."/>
            <person name="Mekalanos J.J."/>
            <person name="Venter J.C."/>
            <person name="Fraser C.M."/>
        </authorList>
    </citation>
    <scope>NUCLEOTIDE SEQUENCE [LARGE SCALE GENOMIC DNA]</scope>
    <source>
        <strain>ATCC 39315 / El Tor Inaba N16961</strain>
    </source>
</reference>